<geneLocation type="plasmid">
    <name>sym pNGR234a</name>
</geneLocation>
<feature type="chain" id="PRO_0000200966" description="Uncharacterized protein y4xG">
    <location>
        <begin position="1"/>
        <end position="505"/>
    </location>
</feature>
<feature type="transmembrane region" description="Helical" evidence="1">
    <location>
        <begin position="11"/>
        <end position="27"/>
    </location>
</feature>
<gene>
    <name type="ordered locus">NGR_a00820</name>
    <name type="ORF">y4xG</name>
</gene>
<accession>P55699</accession>
<comment type="subcellular location">
    <subcellularLocation>
        <location evidence="2">Membrane</location>
        <topology evidence="2">Single-pass membrane protein</topology>
    </subcellularLocation>
</comment>
<proteinExistence type="predicted"/>
<dbReference type="EMBL" id="U00090">
    <property type="protein sequence ID" value="AAB91930.1"/>
    <property type="molecule type" value="Genomic_DNA"/>
</dbReference>
<dbReference type="PIR" id="T10835">
    <property type="entry name" value="T10835"/>
</dbReference>
<dbReference type="RefSeq" id="NP_444143.1">
    <property type="nucleotide sequence ID" value="NC_000914.2"/>
</dbReference>
<dbReference type="SMR" id="P55699"/>
<dbReference type="KEGG" id="rhi:NGR_a00820"/>
<dbReference type="PATRIC" id="fig|394.7.peg.72"/>
<dbReference type="eggNOG" id="COG0644">
    <property type="taxonomic scope" value="Bacteria"/>
</dbReference>
<dbReference type="HOGENOM" id="CLU_022247_0_0_5"/>
<dbReference type="OrthoDB" id="462203at2"/>
<dbReference type="Proteomes" id="UP000001054">
    <property type="component" value="Plasmid pNGR234a"/>
</dbReference>
<dbReference type="GO" id="GO:0016020">
    <property type="term" value="C:membrane"/>
    <property type="evidence" value="ECO:0007669"/>
    <property type="project" value="UniProtKB-SubCell"/>
</dbReference>
<dbReference type="GO" id="GO:0004497">
    <property type="term" value="F:monooxygenase activity"/>
    <property type="evidence" value="ECO:0007669"/>
    <property type="project" value="InterPro"/>
</dbReference>
<dbReference type="Gene3D" id="3.50.50.60">
    <property type="entry name" value="FAD/NAD(P)-binding domain"/>
    <property type="match status" value="1"/>
</dbReference>
<dbReference type="InterPro" id="IPR036188">
    <property type="entry name" value="FAD/NAD-bd_sf"/>
</dbReference>
<dbReference type="InterPro" id="IPR050816">
    <property type="entry name" value="Flavin-dep_Halogenase_NPB"/>
</dbReference>
<dbReference type="InterPro" id="IPR006905">
    <property type="entry name" value="Flavin_halogenase"/>
</dbReference>
<dbReference type="InterPro" id="IPR033856">
    <property type="entry name" value="Trp_halogen"/>
</dbReference>
<dbReference type="PANTHER" id="PTHR43747">
    <property type="entry name" value="FAD-BINDING PROTEIN"/>
    <property type="match status" value="1"/>
</dbReference>
<dbReference type="PANTHER" id="PTHR43747:SF4">
    <property type="entry name" value="FLAVIN-DEPENDENT TRYPTOPHAN HALOGENASE"/>
    <property type="match status" value="1"/>
</dbReference>
<dbReference type="Pfam" id="PF04820">
    <property type="entry name" value="Trp_halogenase"/>
    <property type="match status" value="1"/>
</dbReference>
<dbReference type="PIRSF" id="PIRSF011396">
    <property type="entry name" value="Trp_halogenase"/>
    <property type="match status" value="1"/>
</dbReference>
<dbReference type="SUPFAM" id="SSF51905">
    <property type="entry name" value="FAD/NAD(P)-binding domain"/>
    <property type="match status" value="1"/>
</dbReference>
<evidence type="ECO:0000255" key="1"/>
<evidence type="ECO:0000305" key="2"/>
<keyword id="KW-0472">Membrane</keyword>
<keyword id="KW-0614">Plasmid</keyword>
<keyword id="KW-1185">Reference proteome</keyword>
<keyword id="KW-0812">Transmembrane</keyword>
<keyword id="KW-1133">Transmembrane helix</keyword>
<organism>
    <name type="scientific">Sinorhizobium fredii (strain NBRC 101917 / NGR234)</name>
    <dbReference type="NCBI Taxonomy" id="394"/>
    <lineage>
        <taxon>Bacteria</taxon>
        <taxon>Pseudomonadati</taxon>
        <taxon>Pseudomonadota</taxon>
        <taxon>Alphaproteobacteria</taxon>
        <taxon>Hyphomicrobiales</taxon>
        <taxon>Rhizobiaceae</taxon>
        <taxon>Sinorhizobium/Ensifer group</taxon>
        <taxon>Sinorhizobium</taxon>
    </lineage>
</organism>
<sequence length="505" mass="55456">MMLDLTNAKRIGIIGGGIVGWLAAIALRRVFDVDVDVTVIEAPTVFPLGPGEGGSLNLIDTLCRNELDLDVFIGEAGATHKLGVLYENWRGGGIPDRYYRMFGGSGIPEIECRVGGFFPLLSARIAAGENLHTCIPGFELITKKASQVEIDELLATGESGLYPSFHFNHAGFERYLRRVGLARGITSRRAVVHGMRLDDRGHVNAFQLGGEELEVDFAVDASGFARLGLGKVFNTRWCSFANVLPTDRAIIFELEPRGSSPVTRATAMKAGWMWEAPLNRSISAGYAFSSRYADAAMAIAEVENHYGFRVEAKHELSLDQGYFSTAWVNNFVALGTASGFVEPLEAALAAHTFEALRNLERILANGSGIVPARAIEGYNSANARCWTGVRDFLRLHYDSKRIDTPFWRDLAAAELPEGYANLRACFQKRTPRFIDIQPYVGSGWQSLFHEIDWISVAVPLGVVPQAAACAELRRLSTESRSEVQAYVDRLKGTIAKISSTRGYMH</sequence>
<protein>
    <recommendedName>
        <fullName>Uncharacterized protein y4xG</fullName>
    </recommendedName>
</protein>
<name>Y4XG_SINFN</name>
<reference key="1">
    <citation type="journal article" date="1997" name="Nature">
        <title>Molecular basis of symbiosis between Rhizobium and legumes.</title>
        <authorList>
            <person name="Freiberg C.A."/>
            <person name="Fellay R."/>
            <person name="Bairoch A."/>
            <person name="Broughton W.J."/>
            <person name="Rosenthal A."/>
            <person name="Perret X."/>
        </authorList>
    </citation>
    <scope>NUCLEOTIDE SEQUENCE [LARGE SCALE GENOMIC DNA]</scope>
    <source>
        <strain>NBRC 101917 / NGR234</strain>
    </source>
</reference>
<reference key="2">
    <citation type="journal article" date="2009" name="Appl. Environ. Microbiol.">
        <title>Rhizobium sp. strain NGR234 possesses a remarkable number of secretion systems.</title>
        <authorList>
            <person name="Schmeisser C."/>
            <person name="Liesegang H."/>
            <person name="Krysciak D."/>
            <person name="Bakkou N."/>
            <person name="Le Quere A."/>
            <person name="Wollherr A."/>
            <person name="Heinemeyer I."/>
            <person name="Morgenstern B."/>
            <person name="Pommerening-Roeser A."/>
            <person name="Flores M."/>
            <person name="Palacios R."/>
            <person name="Brenner S."/>
            <person name="Gottschalk G."/>
            <person name="Schmitz R.A."/>
            <person name="Broughton W.J."/>
            <person name="Perret X."/>
            <person name="Strittmatter A.W."/>
            <person name="Streit W.R."/>
        </authorList>
    </citation>
    <scope>NUCLEOTIDE SEQUENCE [LARGE SCALE GENOMIC DNA]</scope>
    <source>
        <strain>NBRC 101917 / NGR234</strain>
    </source>
</reference>